<organism>
    <name type="scientific">Panthera tigris altaica</name>
    <name type="common">Siberian tiger</name>
    <dbReference type="NCBI Taxonomy" id="74533"/>
    <lineage>
        <taxon>Eukaryota</taxon>
        <taxon>Metazoa</taxon>
        <taxon>Chordata</taxon>
        <taxon>Craniata</taxon>
        <taxon>Vertebrata</taxon>
        <taxon>Euteleostomi</taxon>
        <taxon>Mammalia</taxon>
        <taxon>Eutheria</taxon>
        <taxon>Laurasiatheria</taxon>
        <taxon>Carnivora</taxon>
        <taxon>Feliformia</taxon>
        <taxon>Felidae</taxon>
        <taxon>Pantherinae</taxon>
        <taxon>Panthera</taxon>
    </lineage>
</organism>
<comment type="function">
    <text evidence="2">Shared alpha chain of the active heterodimeric glycoprotein hormones thyrotropin/thyroid stimulating hormone/TSH, lutropin/luteinizing hormone/LH and follitropin/follicle stimulating hormone/FSH. These hormones bind specific receptors on target cells that in turn activate downstream signaling pathways.</text>
</comment>
<comment type="subunit">
    <text evidence="2">Heterodimer. The active hormones thyrotropin, lutropin and follitropin are heterodimers composed of CGA, a common alpha chain described here and a unique beta chain which confers their biological specificity to the hormones: TSHB for thyrotropin, LHB for lutropin and FSHB for follitropin.</text>
</comment>
<comment type="subcellular location">
    <subcellularLocation>
        <location evidence="2">Secreted</location>
    </subcellularLocation>
</comment>
<comment type="similarity">
    <text evidence="3">Belongs to the glycoprotein hormones subunit alpha family.</text>
</comment>
<keyword id="KW-1015">Disulfide bond</keyword>
<keyword id="KW-0325">Glycoprotein</keyword>
<keyword id="KW-0372">Hormone</keyword>
<keyword id="KW-1185">Reference proteome</keyword>
<keyword id="KW-0964">Secreted</keyword>
<keyword id="KW-0732">Signal</keyword>
<name>GLHA_PANTA</name>
<protein>
    <recommendedName>
        <fullName>Glycoprotein hormones alpha chain</fullName>
    </recommendedName>
    <alternativeName>
        <fullName>Anterior pituitary glycoprotein hormones common subunit alpha</fullName>
    </alternativeName>
    <alternativeName>
        <fullName>Follicle-stimulating hormone alpha chain</fullName>
        <shortName>FSH-alpha</shortName>
    </alternativeName>
    <alternativeName>
        <fullName>Follitropin alpha chain</fullName>
    </alternativeName>
    <alternativeName>
        <fullName>Luteinizing hormone alpha chain</fullName>
        <shortName>LSH-alpha</shortName>
    </alternativeName>
    <alternativeName>
        <fullName>Lutropin alpha chain</fullName>
    </alternativeName>
    <alternativeName>
        <fullName>Thyroid-stimulating hormone alpha chain</fullName>
        <shortName>TSH-alpha</shortName>
    </alternativeName>
    <alternativeName>
        <fullName>Thyrotropin alpha chain</fullName>
    </alternativeName>
</protein>
<proteinExistence type="evidence at transcript level"/>
<reference key="1">
    <citation type="journal article" date="2003" name="Biol. Reprod.">
        <title>Efficacy of porcine gonadotropins for repeated stimulation of ovarian activity for oocyte retrieval and in vitro embryo production and cryopreservation in Siberian tigers (Panthera tigris altaica).</title>
        <authorList>
            <person name="Crichton E.G."/>
            <person name="Bedows E."/>
            <person name="Miller-Lindholm A.K."/>
            <person name="Baldwin D.M."/>
            <person name="Armstrong D.L."/>
            <person name="Graham L.H."/>
            <person name="Ford J.J."/>
            <person name="Gjorret J.O."/>
            <person name="Hyttel P."/>
            <person name="Pope C.E."/>
            <person name="Vajta G."/>
            <person name="Loskutoff N.M."/>
        </authorList>
    </citation>
    <scope>NUCLEOTIDE SEQUENCE [MRNA]</scope>
    <source>
        <tissue>Pituitary</tissue>
    </source>
</reference>
<reference key="2">
    <citation type="submission" date="2001-08" db="EMBL/GenBank/DDBJ databases">
        <title>Panthera tigris altaica pituitary glycoprotein hormone alpha subunit.</title>
        <authorList>
            <person name="Liao M.J."/>
            <person name="Zhu M.Y."/>
            <person name="Zhang A.J."/>
        </authorList>
    </citation>
    <scope>NUCLEOTIDE SEQUENCE [MRNA]</scope>
    <source>
        <tissue>Pituitary</tissue>
    </source>
</reference>
<accession>Q9BDI8</accession>
<dbReference type="EMBL" id="AF354939">
    <property type="protein sequence ID" value="AAK30590.1"/>
    <property type="molecule type" value="mRNA"/>
</dbReference>
<dbReference type="EMBL" id="AF408393">
    <property type="protein sequence ID" value="AAN01114.1"/>
    <property type="molecule type" value="mRNA"/>
</dbReference>
<dbReference type="RefSeq" id="NP_001277528.1">
    <property type="nucleotide sequence ID" value="NM_001290599.1"/>
</dbReference>
<dbReference type="RefSeq" id="XP_007076971.1">
    <property type="nucleotide sequence ID" value="XM_007076909.2"/>
</dbReference>
<dbReference type="SMR" id="Q9BDI8"/>
<dbReference type="GlyCosmos" id="Q9BDI8">
    <property type="glycosylation" value="2 sites, No reported glycans"/>
</dbReference>
<dbReference type="Ensembl" id="ENSPTIT00000019936.1">
    <property type="protein sequence ID" value="ENSPTIP00000015783.1"/>
    <property type="gene ID" value="ENSPTIG00000014772.1"/>
</dbReference>
<dbReference type="GeneID" id="102954911"/>
<dbReference type="KEGG" id="ptg:102954911"/>
<dbReference type="CTD" id="1081"/>
<dbReference type="GeneTree" id="ENSGT00390000012242"/>
<dbReference type="Proteomes" id="UP000675900">
    <property type="component" value="Unassembled WGS sequence"/>
</dbReference>
<dbReference type="GO" id="GO:0005615">
    <property type="term" value="C:extracellular space"/>
    <property type="evidence" value="ECO:0000250"/>
    <property type="project" value="UniProtKB"/>
</dbReference>
<dbReference type="GO" id="GO:0016914">
    <property type="term" value="C:follicle-stimulating hormone complex"/>
    <property type="evidence" value="ECO:0000250"/>
    <property type="project" value="UniProtKB"/>
</dbReference>
<dbReference type="GO" id="GO:0016913">
    <property type="term" value="F:follicle-stimulating hormone activity"/>
    <property type="evidence" value="ECO:0000250"/>
    <property type="project" value="UniProtKB"/>
</dbReference>
<dbReference type="GO" id="GO:0007186">
    <property type="term" value="P:G protein-coupled receptor signaling pathway"/>
    <property type="evidence" value="ECO:0000250"/>
    <property type="project" value="UniProtKB"/>
</dbReference>
<dbReference type="GO" id="GO:0010893">
    <property type="term" value="P:positive regulation of steroid biosynthetic process"/>
    <property type="evidence" value="ECO:0000250"/>
    <property type="project" value="UniProtKB"/>
</dbReference>
<dbReference type="GO" id="GO:0010469">
    <property type="term" value="P:regulation of signaling receptor activity"/>
    <property type="evidence" value="ECO:0000250"/>
    <property type="project" value="UniProtKB"/>
</dbReference>
<dbReference type="GO" id="GO:0006590">
    <property type="term" value="P:thyroid hormone generation"/>
    <property type="evidence" value="ECO:0007669"/>
    <property type="project" value="TreeGrafter"/>
</dbReference>
<dbReference type="FunFam" id="2.10.90.10:FF:000011">
    <property type="entry name" value="Glycoprotein hormones alpha chain"/>
    <property type="match status" value="1"/>
</dbReference>
<dbReference type="Gene3D" id="2.10.90.10">
    <property type="entry name" value="Cystine-knot cytokines"/>
    <property type="match status" value="1"/>
</dbReference>
<dbReference type="InterPro" id="IPR029034">
    <property type="entry name" value="Cystine-knot_cytokine"/>
</dbReference>
<dbReference type="InterPro" id="IPR000476">
    <property type="entry name" value="Glyco_hormone"/>
</dbReference>
<dbReference type="PANTHER" id="PTHR11509">
    <property type="entry name" value="GLYCOPROTEIN HORMONE ALPHA CHAIN"/>
    <property type="match status" value="1"/>
</dbReference>
<dbReference type="PANTHER" id="PTHR11509:SF0">
    <property type="entry name" value="GLYCOPROTEIN HORMONES ALPHA CHAIN"/>
    <property type="match status" value="1"/>
</dbReference>
<dbReference type="Pfam" id="PF00236">
    <property type="entry name" value="Hormone_6"/>
    <property type="match status" value="1"/>
</dbReference>
<dbReference type="PRINTS" id="PR00274">
    <property type="entry name" value="GLYCOHORMONE"/>
</dbReference>
<dbReference type="SMART" id="SM00067">
    <property type="entry name" value="GHA"/>
    <property type="match status" value="1"/>
</dbReference>
<dbReference type="SUPFAM" id="SSF57501">
    <property type="entry name" value="Cystine-knot cytokines"/>
    <property type="match status" value="1"/>
</dbReference>
<dbReference type="PROSITE" id="PS00779">
    <property type="entry name" value="GLYCO_HORMONE_ALPHA_1"/>
    <property type="match status" value="1"/>
</dbReference>
<dbReference type="PROSITE" id="PS00780">
    <property type="entry name" value="GLYCO_HORMONE_ALPHA_2"/>
    <property type="match status" value="1"/>
</dbReference>
<dbReference type="PROSITE" id="PS50277">
    <property type="entry name" value="GLYCO_HORMONE_ALPHA_3"/>
    <property type="match status" value="1"/>
</dbReference>
<feature type="signal peptide" evidence="1">
    <location>
        <begin position="1"/>
        <end position="24"/>
    </location>
</feature>
<feature type="chain" id="PRO_0000042878" description="Glycoprotein hormones alpha chain">
    <location>
        <begin position="25"/>
        <end position="120"/>
    </location>
</feature>
<feature type="glycosylation site" description="N-linked (GlcNAc...) asparagine" evidence="2">
    <location>
        <position position="80"/>
    </location>
</feature>
<feature type="glycosylation site" description="N-linked (GlcNAc...) asparagine" evidence="2">
    <location>
        <position position="106"/>
    </location>
</feature>
<feature type="disulfide bond" evidence="2">
    <location>
        <begin position="35"/>
        <end position="59"/>
    </location>
</feature>
<feature type="disulfide bond" evidence="2">
    <location>
        <begin position="38"/>
        <end position="88"/>
    </location>
</feature>
<feature type="disulfide bond" evidence="2">
    <location>
        <begin position="56"/>
        <end position="110"/>
    </location>
</feature>
<feature type="disulfide bond" evidence="2">
    <location>
        <begin position="60"/>
        <end position="112"/>
    </location>
</feature>
<feature type="disulfide bond" evidence="2">
    <location>
        <begin position="87"/>
        <end position="115"/>
    </location>
</feature>
<evidence type="ECO:0000250" key="1"/>
<evidence type="ECO:0000250" key="2">
    <source>
        <dbReference type="UniProtKB" id="P01215"/>
    </source>
</evidence>
<evidence type="ECO:0000305" key="3"/>
<sequence length="120" mass="13499">MDYYRKYAAVILAILSVFLHILHSFPDGEFTMQGCPECKLKENKYFSKLGAPVYQCMGCCFSRAYPTPARSKKTMLVPKNITSEATCCVAKAFTKATVMGNAKVENHTECHCSTCYYHKS</sequence>
<gene>
    <name type="primary">CGA</name>
</gene>